<evidence type="ECO:0000255" key="1">
    <source>
        <dbReference type="HAMAP-Rule" id="MF_00328"/>
    </source>
</evidence>
<gene>
    <name evidence="1" type="primary">gmk</name>
    <name type="ordered locus">LI0310</name>
</gene>
<dbReference type="EC" id="2.7.4.8" evidence="1"/>
<dbReference type="EMBL" id="AM180252">
    <property type="protein sequence ID" value="CAJ54366.1"/>
    <property type="molecule type" value="Genomic_DNA"/>
</dbReference>
<dbReference type="RefSeq" id="WP_011526395.1">
    <property type="nucleotide sequence ID" value="NC_008011.1"/>
</dbReference>
<dbReference type="SMR" id="Q1MRL0"/>
<dbReference type="STRING" id="363253.LI0310"/>
<dbReference type="KEGG" id="lip:LI0310"/>
<dbReference type="eggNOG" id="COG0194">
    <property type="taxonomic scope" value="Bacteria"/>
</dbReference>
<dbReference type="HOGENOM" id="CLU_001715_1_2_7"/>
<dbReference type="OrthoDB" id="9808150at2"/>
<dbReference type="Proteomes" id="UP000002430">
    <property type="component" value="Chromosome"/>
</dbReference>
<dbReference type="GO" id="GO:0005829">
    <property type="term" value="C:cytosol"/>
    <property type="evidence" value="ECO:0007669"/>
    <property type="project" value="TreeGrafter"/>
</dbReference>
<dbReference type="GO" id="GO:0005524">
    <property type="term" value="F:ATP binding"/>
    <property type="evidence" value="ECO:0007669"/>
    <property type="project" value="UniProtKB-UniRule"/>
</dbReference>
<dbReference type="GO" id="GO:0004385">
    <property type="term" value="F:guanylate kinase activity"/>
    <property type="evidence" value="ECO:0007669"/>
    <property type="project" value="UniProtKB-UniRule"/>
</dbReference>
<dbReference type="CDD" id="cd00071">
    <property type="entry name" value="GMPK"/>
    <property type="match status" value="1"/>
</dbReference>
<dbReference type="FunFam" id="3.30.63.10:FF:000002">
    <property type="entry name" value="Guanylate kinase 1"/>
    <property type="match status" value="1"/>
</dbReference>
<dbReference type="Gene3D" id="3.30.63.10">
    <property type="entry name" value="Guanylate Kinase phosphate binding domain"/>
    <property type="match status" value="1"/>
</dbReference>
<dbReference type="Gene3D" id="3.40.50.300">
    <property type="entry name" value="P-loop containing nucleotide triphosphate hydrolases"/>
    <property type="match status" value="2"/>
</dbReference>
<dbReference type="HAMAP" id="MF_00328">
    <property type="entry name" value="Guanylate_kinase"/>
    <property type="match status" value="1"/>
</dbReference>
<dbReference type="InterPro" id="IPR008145">
    <property type="entry name" value="GK/Ca_channel_bsu"/>
</dbReference>
<dbReference type="InterPro" id="IPR008144">
    <property type="entry name" value="Guanylate_kin-like_dom"/>
</dbReference>
<dbReference type="InterPro" id="IPR017665">
    <property type="entry name" value="Guanylate_kinase"/>
</dbReference>
<dbReference type="InterPro" id="IPR020590">
    <property type="entry name" value="Guanylate_kinase_CS"/>
</dbReference>
<dbReference type="InterPro" id="IPR027417">
    <property type="entry name" value="P-loop_NTPase"/>
</dbReference>
<dbReference type="NCBIfam" id="TIGR03263">
    <property type="entry name" value="guanyl_kin"/>
    <property type="match status" value="1"/>
</dbReference>
<dbReference type="PANTHER" id="PTHR23117:SF13">
    <property type="entry name" value="GUANYLATE KINASE"/>
    <property type="match status" value="1"/>
</dbReference>
<dbReference type="PANTHER" id="PTHR23117">
    <property type="entry name" value="GUANYLATE KINASE-RELATED"/>
    <property type="match status" value="1"/>
</dbReference>
<dbReference type="Pfam" id="PF00625">
    <property type="entry name" value="Guanylate_kin"/>
    <property type="match status" value="1"/>
</dbReference>
<dbReference type="SMART" id="SM00072">
    <property type="entry name" value="GuKc"/>
    <property type="match status" value="1"/>
</dbReference>
<dbReference type="SUPFAM" id="SSF52540">
    <property type="entry name" value="P-loop containing nucleoside triphosphate hydrolases"/>
    <property type="match status" value="1"/>
</dbReference>
<dbReference type="PROSITE" id="PS00856">
    <property type="entry name" value="GUANYLATE_KINASE_1"/>
    <property type="match status" value="1"/>
</dbReference>
<dbReference type="PROSITE" id="PS50052">
    <property type="entry name" value="GUANYLATE_KINASE_2"/>
    <property type="match status" value="1"/>
</dbReference>
<sequence length="212" mass="24441">MTKESSVLNHKASGTALVICAPSGTGKTTLIQRLRKEFPCFAYSISCTTRPPRKNEEDGKDYYFISQEEFIARKNEKYFAEWAYVHGYFYGTPLAPILTILNNGQDILFDIDVQGAAQLYLTLPYAKYIFLLPPTMVELEKRLRSRGTDREDIIQHRLLSATQEIRQAHWFDTWIVNENIDKAYDELRATYLASKLSPKFQPTLITSILEGW</sequence>
<name>KGUA_LAWIP</name>
<reference key="1">
    <citation type="submission" date="2005-11" db="EMBL/GenBank/DDBJ databases">
        <title>The complete genome sequence of Lawsonia intracellularis: the causative agent of proliferative enteropathy.</title>
        <authorList>
            <person name="Kaur K."/>
            <person name="Zhang Q."/>
            <person name="Beckler D."/>
            <person name="Munir S."/>
            <person name="Li L."/>
            <person name="Kinsley K."/>
            <person name="Herron L."/>
            <person name="Peterson A."/>
            <person name="May B."/>
            <person name="Singh S."/>
            <person name="Gebhart C."/>
            <person name="Kapur V."/>
        </authorList>
    </citation>
    <scope>NUCLEOTIDE SEQUENCE [LARGE SCALE GENOMIC DNA]</scope>
    <source>
        <strain>PHE/MN1-00</strain>
    </source>
</reference>
<comment type="function">
    <text evidence="1">Essential for recycling GMP and indirectly, cGMP.</text>
</comment>
<comment type="catalytic activity">
    <reaction evidence="1">
        <text>GMP + ATP = GDP + ADP</text>
        <dbReference type="Rhea" id="RHEA:20780"/>
        <dbReference type="ChEBI" id="CHEBI:30616"/>
        <dbReference type="ChEBI" id="CHEBI:58115"/>
        <dbReference type="ChEBI" id="CHEBI:58189"/>
        <dbReference type="ChEBI" id="CHEBI:456216"/>
        <dbReference type="EC" id="2.7.4.8"/>
    </reaction>
</comment>
<comment type="subcellular location">
    <subcellularLocation>
        <location evidence="1">Cytoplasm</location>
    </subcellularLocation>
</comment>
<comment type="similarity">
    <text evidence="1">Belongs to the guanylate kinase family.</text>
</comment>
<feature type="chain" id="PRO_0000266342" description="Guanylate kinase">
    <location>
        <begin position="1"/>
        <end position="212"/>
    </location>
</feature>
<feature type="domain" description="Guanylate kinase-like" evidence="1">
    <location>
        <begin position="14"/>
        <end position="192"/>
    </location>
</feature>
<feature type="binding site" evidence="1">
    <location>
        <begin position="21"/>
        <end position="28"/>
    </location>
    <ligand>
        <name>ATP</name>
        <dbReference type="ChEBI" id="CHEBI:30616"/>
    </ligand>
</feature>
<keyword id="KW-0067">ATP-binding</keyword>
<keyword id="KW-0963">Cytoplasm</keyword>
<keyword id="KW-0418">Kinase</keyword>
<keyword id="KW-0547">Nucleotide-binding</keyword>
<keyword id="KW-1185">Reference proteome</keyword>
<keyword id="KW-0808">Transferase</keyword>
<proteinExistence type="inferred from homology"/>
<protein>
    <recommendedName>
        <fullName evidence="1">Guanylate kinase</fullName>
        <ecNumber evidence="1">2.7.4.8</ecNumber>
    </recommendedName>
    <alternativeName>
        <fullName evidence="1">GMP kinase</fullName>
    </alternativeName>
</protein>
<accession>Q1MRL0</accession>
<organism>
    <name type="scientific">Lawsonia intracellularis (strain PHE/MN1-00)</name>
    <dbReference type="NCBI Taxonomy" id="363253"/>
    <lineage>
        <taxon>Bacteria</taxon>
        <taxon>Pseudomonadati</taxon>
        <taxon>Thermodesulfobacteriota</taxon>
        <taxon>Desulfovibrionia</taxon>
        <taxon>Desulfovibrionales</taxon>
        <taxon>Desulfovibrionaceae</taxon>
        <taxon>Lawsonia</taxon>
    </lineage>
</organism>